<proteinExistence type="inferred from homology"/>
<accession>Q046B5</accession>
<sequence>MIQHESRLKVADNSGARELLVIKILGGSKRKTGNIGDIVVAAVKQATPGGVVKKGDVVKAVIVRTKSGARREDGSYIKFDENAAVVINADKSPRGTRIFGPVARELREHDFMKIVSLAPEVL</sequence>
<feature type="chain" id="PRO_1000055606" description="Large ribosomal subunit protein uL14">
    <location>
        <begin position="1"/>
        <end position="122"/>
    </location>
</feature>
<protein>
    <recommendedName>
        <fullName evidence="1">Large ribosomal subunit protein uL14</fullName>
    </recommendedName>
    <alternativeName>
        <fullName evidence="2">50S ribosomal protein L14</fullName>
    </alternativeName>
</protein>
<comment type="function">
    <text evidence="1">Binds to 23S rRNA. Forms part of two intersubunit bridges in the 70S ribosome.</text>
</comment>
<comment type="subunit">
    <text evidence="1">Part of the 50S ribosomal subunit. Forms a cluster with proteins L3 and L19. In the 70S ribosome, L14 and L19 interact and together make contacts with the 16S rRNA in bridges B5 and B8.</text>
</comment>
<comment type="similarity">
    <text evidence="1">Belongs to the universal ribosomal protein uL14 family.</text>
</comment>
<dbReference type="EMBL" id="CP000413">
    <property type="protein sequence ID" value="ABJ59707.1"/>
    <property type="molecule type" value="Genomic_DNA"/>
</dbReference>
<dbReference type="RefSeq" id="WP_003647826.1">
    <property type="nucleotide sequence ID" value="NZ_WBMG01000001.1"/>
</dbReference>
<dbReference type="SMR" id="Q046B5"/>
<dbReference type="GeneID" id="83569764"/>
<dbReference type="KEGG" id="lga:LGAS_0301"/>
<dbReference type="HOGENOM" id="CLU_095071_2_1_9"/>
<dbReference type="BioCyc" id="LGAS324831:G1G6Y-299-MONOMER"/>
<dbReference type="Proteomes" id="UP000000664">
    <property type="component" value="Chromosome"/>
</dbReference>
<dbReference type="GO" id="GO:0022625">
    <property type="term" value="C:cytosolic large ribosomal subunit"/>
    <property type="evidence" value="ECO:0007669"/>
    <property type="project" value="TreeGrafter"/>
</dbReference>
<dbReference type="GO" id="GO:0070180">
    <property type="term" value="F:large ribosomal subunit rRNA binding"/>
    <property type="evidence" value="ECO:0007669"/>
    <property type="project" value="TreeGrafter"/>
</dbReference>
<dbReference type="GO" id="GO:0003735">
    <property type="term" value="F:structural constituent of ribosome"/>
    <property type="evidence" value="ECO:0007669"/>
    <property type="project" value="InterPro"/>
</dbReference>
<dbReference type="GO" id="GO:0006412">
    <property type="term" value="P:translation"/>
    <property type="evidence" value="ECO:0007669"/>
    <property type="project" value="UniProtKB-UniRule"/>
</dbReference>
<dbReference type="CDD" id="cd00337">
    <property type="entry name" value="Ribosomal_uL14"/>
    <property type="match status" value="1"/>
</dbReference>
<dbReference type="FunFam" id="2.40.150.20:FF:000001">
    <property type="entry name" value="50S ribosomal protein L14"/>
    <property type="match status" value="1"/>
</dbReference>
<dbReference type="Gene3D" id="2.40.150.20">
    <property type="entry name" value="Ribosomal protein L14"/>
    <property type="match status" value="1"/>
</dbReference>
<dbReference type="HAMAP" id="MF_01367">
    <property type="entry name" value="Ribosomal_uL14"/>
    <property type="match status" value="1"/>
</dbReference>
<dbReference type="InterPro" id="IPR000218">
    <property type="entry name" value="Ribosomal_uL14"/>
</dbReference>
<dbReference type="InterPro" id="IPR005745">
    <property type="entry name" value="Ribosomal_uL14_bac-type"/>
</dbReference>
<dbReference type="InterPro" id="IPR019972">
    <property type="entry name" value="Ribosomal_uL14_CS"/>
</dbReference>
<dbReference type="InterPro" id="IPR036853">
    <property type="entry name" value="Ribosomal_uL14_sf"/>
</dbReference>
<dbReference type="NCBIfam" id="TIGR01067">
    <property type="entry name" value="rplN_bact"/>
    <property type="match status" value="1"/>
</dbReference>
<dbReference type="PANTHER" id="PTHR11761">
    <property type="entry name" value="50S/60S RIBOSOMAL PROTEIN L14/L23"/>
    <property type="match status" value="1"/>
</dbReference>
<dbReference type="PANTHER" id="PTHR11761:SF3">
    <property type="entry name" value="LARGE RIBOSOMAL SUBUNIT PROTEIN UL14M"/>
    <property type="match status" value="1"/>
</dbReference>
<dbReference type="Pfam" id="PF00238">
    <property type="entry name" value="Ribosomal_L14"/>
    <property type="match status" value="1"/>
</dbReference>
<dbReference type="SMART" id="SM01374">
    <property type="entry name" value="Ribosomal_L14"/>
    <property type="match status" value="1"/>
</dbReference>
<dbReference type="SUPFAM" id="SSF50193">
    <property type="entry name" value="Ribosomal protein L14"/>
    <property type="match status" value="1"/>
</dbReference>
<dbReference type="PROSITE" id="PS00049">
    <property type="entry name" value="RIBOSOMAL_L14"/>
    <property type="match status" value="1"/>
</dbReference>
<organism>
    <name type="scientific">Lactobacillus gasseri (strain ATCC 33323 / DSM 20243 / BCRC 14619 / CIP 102991 / JCM 1131 / KCTC 3163 / NCIMB 11718 / NCTC 13722 / AM63)</name>
    <dbReference type="NCBI Taxonomy" id="324831"/>
    <lineage>
        <taxon>Bacteria</taxon>
        <taxon>Bacillati</taxon>
        <taxon>Bacillota</taxon>
        <taxon>Bacilli</taxon>
        <taxon>Lactobacillales</taxon>
        <taxon>Lactobacillaceae</taxon>
        <taxon>Lactobacillus</taxon>
    </lineage>
</organism>
<reference key="1">
    <citation type="journal article" date="2006" name="Proc. Natl. Acad. Sci. U.S.A.">
        <title>Comparative genomics of the lactic acid bacteria.</title>
        <authorList>
            <person name="Makarova K.S."/>
            <person name="Slesarev A."/>
            <person name="Wolf Y.I."/>
            <person name="Sorokin A."/>
            <person name="Mirkin B."/>
            <person name="Koonin E.V."/>
            <person name="Pavlov A."/>
            <person name="Pavlova N."/>
            <person name="Karamychev V."/>
            <person name="Polouchine N."/>
            <person name="Shakhova V."/>
            <person name="Grigoriev I."/>
            <person name="Lou Y."/>
            <person name="Rohksar D."/>
            <person name="Lucas S."/>
            <person name="Huang K."/>
            <person name="Goodstein D.M."/>
            <person name="Hawkins T."/>
            <person name="Plengvidhya V."/>
            <person name="Welker D."/>
            <person name="Hughes J."/>
            <person name="Goh Y."/>
            <person name="Benson A."/>
            <person name="Baldwin K."/>
            <person name="Lee J.-H."/>
            <person name="Diaz-Muniz I."/>
            <person name="Dosti B."/>
            <person name="Smeianov V."/>
            <person name="Wechter W."/>
            <person name="Barabote R."/>
            <person name="Lorca G."/>
            <person name="Altermann E."/>
            <person name="Barrangou R."/>
            <person name="Ganesan B."/>
            <person name="Xie Y."/>
            <person name="Rawsthorne H."/>
            <person name="Tamir D."/>
            <person name="Parker C."/>
            <person name="Breidt F."/>
            <person name="Broadbent J.R."/>
            <person name="Hutkins R."/>
            <person name="O'Sullivan D."/>
            <person name="Steele J."/>
            <person name="Unlu G."/>
            <person name="Saier M.H. Jr."/>
            <person name="Klaenhammer T."/>
            <person name="Richardson P."/>
            <person name="Kozyavkin S."/>
            <person name="Weimer B.C."/>
            <person name="Mills D.A."/>
        </authorList>
    </citation>
    <scope>NUCLEOTIDE SEQUENCE [LARGE SCALE GENOMIC DNA]</scope>
    <source>
        <strain>ATCC 33323 / DSM 20243 / BCRC 14619 / CIP 102991 / JCM 1131 / KCTC 3163 / NCIMB 11718 / NCTC 13722 / AM63</strain>
    </source>
</reference>
<gene>
    <name evidence="1" type="primary">rplN</name>
    <name type="ordered locus">LGAS_0301</name>
</gene>
<name>RL14_LACGA</name>
<keyword id="KW-0687">Ribonucleoprotein</keyword>
<keyword id="KW-0689">Ribosomal protein</keyword>
<keyword id="KW-0694">RNA-binding</keyword>
<keyword id="KW-0699">rRNA-binding</keyword>
<evidence type="ECO:0000255" key="1">
    <source>
        <dbReference type="HAMAP-Rule" id="MF_01367"/>
    </source>
</evidence>
<evidence type="ECO:0000305" key="2"/>